<keyword id="KW-0408">Iron</keyword>
<keyword id="KW-0479">Metal-binding</keyword>
<dbReference type="EMBL" id="AP009240">
    <property type="protein sequence ID" value="BAG78338.1"/>
    <property type="molecule type" value="Genomic_DNA"/>
</dbReference>
<dbReference type="RefSeq" id="WP_000028953.1">
    <property type="nucleotide sequence ID" value="NC_011415.1"/>
</dbReference>
<dbReference type="SMR" id="B6I5A0"/>
<dbReference type="GeneID" id="93774608"/>
<dbReference type="KEGG" id="ecy:ECSE_2814"/>
<dbReference type="HOGENOM" id="CLU_069054_5_1_6"/>
<dbReference type="Proteomes" id="UP000008199">
    <property type="component" value="Chromosome"/>
</dbReference>
<dbReference type="GO" id="GO:0005829">
    <property type="term" value="C:cytosol"/>
    <property type="evidence" value="ECO:0007669"/>
    <property type="project" value="TreeGrafter"/>
</dbReference>
<dbReference type="GO" id="GO:0051537">
    <property type="term" value="F:2 iron, 2 sulfur cluster binding"/>
    <property type="evidence" value="ECO:0007669"/>
    <property type="project" value="TreeGrafter"/>
</dbReference>
<dbReference type="GO" id="GO:0005506">
    <property type="term" value="F:iron ion binding"/>
    <property type="evidence" value="ECO:0007669"/>
    <property type="project" value="UniProtKB-UniRule"/>
</dbReference>
<dbReference type="GO" id="GO:0016226">
    <property type="term" value="P:iron-sulfur cluster assembly"/>
    <property type="evidence" value="ECO:0007669"/>
    <property type="project" value="UniProtKB-UniRule"/>
</dbReference>
<dbReference type="FunFam" id="2.60.300.12:FF:000001">
    <property type="entry name" value="Iron-binding protein IscA"/>
    <property type="match status" value="1"/>
</dbReference>
<dbReference type="Gene3D" id="2.60.300.12">
    <property type="entry name" value="HesB-like domain"/>
    <property type="match status" value="1"/>
</dbReference>
<dbReference type="HAMAP" id="MF_01429">
    <property type="entry name" value="Fe_S_insert_IscA"/>
    <property type="match status" value="1"/>
</dbReference>
<dbReference type="InterPro" id="IPR050322">
    <property type="entry name" value="Fe-S_cluster_asmbl/transfer"/>
</dbReference>
<dbReference type="InterPro" id="IPR000361">
    <property type="entry name" value="FeS_biogenesis"/>
</dbReference>
<dbReference type="InterPro" id="IPR016092">
    <property type="entry name" value="FeS_cluster_insertion"/>
</dbReference>
<dbReference type="InterPro" id="IPR017870">
    <property type="entry name" value="FeS_cluster_insertion_CS"/>
</dbReference>
<dbReference type="InterPro" id="IPR035903">
    <property type="entry name" value="HesB-like_dom_sf"/>
</dbReference>
<dbReference type="InterPro" id="IPR011302">
    <property type="entry name" value="IscA_proteobacteria"/>
</dbReference>
<dbReference type="NCBIfam" id="TIGR00049">
    <property type="entry name" value="iron-sulfur cluster assembly accessory protein"/>
    <property type="match status" value="1"/>
</dbReference>
<dbReference type="NCBIfam" id="TIGR02011">
    <property type="entry name" value="IscA"/>
    <property type="match status" value="1"/>
</dbReference>
<dbReference type="NCBIfam" id="NF007049">
    <property type="entry name" value="PRK09502.1"/>
    <property type="match status" value="1"/>
</dbReference>
<dbReference type="PANTHER" id="PTHR10072:SF41">
    <property type="entry name" value="IRON-SULFUR CLUSTER ASSEMBLY 1 HOMOLOG, MITOCHONDRIAL"/>
    <property type="match status" value="1"/>
</dbReference>
<dbReference type="PANTHER" id="PTHR10072">
    <property type="entry name" value="IRON-SULFUR CLUSTER ASSEMBLY PROTEIN"/>
    <property type="match status" value="1"/>
</dbReference>
<dbReference type="Pfam" id="PF01521">
    <property type="entry name" value="Fe-S_biosyn"/>
    <property type="match status" value="1"/>
</dbReference>
<dbReference type="SUPFAM" id="SSF89360">
    <property type="entry name" value="HesB-like domain"/>
    <property type="match status" value="1"/>
</dbReference>
<dbReference type="PROSITE" id="PS01152">
    <property type="entry name" value="HESB"/>
    <property type="match status" value="1"/>
</dbReference>
<name>ISCA_ECOSE</name>
<protein>
    <recommendedName>
        <fullName evidence="1">Iron-binding protein IscA</fullName>
    </recommendedName>
    <alternativeName>
        <fullName evidence="1">Iron-sulfur cluster assembly protein</fullName>
    </alternativeName>
</protein>
<reference key="1">
    <citation type="journal article" date="2008" name="DNA Res.">
        <title>Complete genome sequence and comparative analysis of the wild-type commensal Escherichia coli strain SE11 isolated from a healthy adult.</title>
        <authorList>
            <person name="Oshima K."/>
            <person name="Toh H."/>
            <person name="Ogura Y."/>
            <person name="Sasamoto H."/>
            <person name="Morita H."/>
            <person name="Park S.-H."/>
            <person name="Ooka T."/>
            <person name="Iyoda S."/>
            <person name="Taylor T.D."/>
            <person name="Hayashi T."/>
            <person name="Itoh K."/>
            <person name="Hattori M."/>
        </authorList>
    </citation>
    <scope>NUCLEOTIDE SEQUENCE [LARGE SCALE GENOMIC DNA]</scope>
    <source>
        <strain>SE11</strain>
    </source>
</reference>
<evidence type="ECO:0000255" key="1">
    <source>
        <dbReference type="HAMAP-Rule" id="MF_01429"/>
    </source>
</evidence>
<feature type="chain" id="PRO_1000145754" description="Iron-binding protein IscA">
    <location>
        <begin position="1"/>
        <end position="107"/>
    </location>
</feature>
<feature type="binding site" evidence="1">
    <location>
        <position position="35"/>
    </location>
    <ligand>
        <name>Fe cation</name>
        <dbReference type="ChEBI" id="CHEBI:24875"/>
    </ligand>
</feature>
<feature type="binding site" evidence="1">
    <location>
        <position position="99"/>
    </location>
    <ligand>
        <name>Fe cation</name>
        <dbReference type="ChEBI" id="CHEBI:24875"/>
    </ligand>
</feature>
<feature type="binding site" evidence="1">
    <location>
        <position position="101"/>
    </location>
    <ligand>
        <name>Fe cation</name>
        <dbReference type="ChEBI" id="CHEBI:24875"/>
    </ligand>
</feature>
<sequence length="107" mass="11556">MSITLSDSAAARVNTFLANRGKGFGLRLGVRTSGCSGMAYVLEFVDEPTPEDIVFEDKGVKVVVDGKSLQFLDGTQLDFVKEGLNEGFKFTNPNVKDECGCGESFHV</sequence>
<accession>B6I5A0</accession>
<comment type="function">
    <text evidence="1">Is able to transfer iron-sulfur clusters to apo-ferredoxin. Multiple cycles of [2Fe2S] cluster formation and transfer are observed, suggesting that IscA acts catalytically. Recruits intracellular free iron so as to provide iron for the assembly of transient iron-sulfur cluster in IscU in the presence of IscS, L-cysteine and the thioredoxin reductase system TrxA/TrxB.</text>
</comment>
<comment type="cofactor">
    <cofactor evidence="1">
        <name>Fe cation</name>
        <dbReference type="ChEBI" id="CHEBI:24875"/>
    </cofactor>
    <text evidence="1">Binds 2 iron ions per dimer. The dimer may bind additional iron ions.</text>
</comment>
<comment type="subunit">
    <text evidence="1">Homodimer; may form tetramers and higher multimers.</text>
</comment>
<comment type="similarity">
    <text evidence="1">Belongs to the HesB/IscA family.</text>
</comment>
<organism>
    <name type="scientific">Escherichia coli (strain SE11)</name>
    <dbReference type="NCBI Taxonomy" id="409438"/>
    <lineage>
        <taxon>Bacteria</taxon>
        <taxon>Pseudomonadati</taxon>
        <taxon>Pseudomonadota</taxon>
        <taxon>Gammaproteobacteria</taxon>
        <taxon>Enterobacterales</taxon>
        <taxon>Enterobacteriaceae</taxon>
        <taxon>Escherichia</taxon>
    </lineage>
</organism>
<proteinExistence type="inferred from homology"/>
<gene>
    <name evidence="1" type="primary">iscA</name>
    <name type="ordered locus">ECSE_2814</name>
</gene>